<protein>
    <recommendedName>
        <fullName evidence="5">Cutinase CUT2</fullName>
        <ecNumber evidence="3 7">3.1.1.74</ecNumber>
    </recommendedName>
</protein>
<organism evidence="8 9">
    <name type="scientific">Pyricularia oryzae (strain 70-15 / ATCC MYA-4617 / FGSC 8958)</name>
    <name type="common">Rice blast fungus</name>
    <name type="synonym">Magnaporthe oryzae</name>
    <dbReference type="NCBI Taxonomy" id="242507"/>
    <lineage>
        <taxon>Eukaryota</taxon>
        <taxon>Fungi</taxon>
        <taxon>Dikarya</taxon>
        <taxon>Ascomycota</taxon>
        <taxon>Pezizomycotina</taxon>
        <taxon>Sordariomycetes</taxon>
        <taxon>Sordariomycetidae</taxon>
        <taxon>Magnaporthales</taxon>
        <taxon>Pyriculariaceae</taxon>
        <taxon>Pyricularia</taxon>
    </lineage>
</organism>
<reference evidence="9" key="1">
    <citation type="journal article" date="2005" name="Nature">
        <title>The genome sequence of the rice blast fungus Magnaporthe grisea.</title>
        <authorList>
            <person name="Dean R.A."/>
            <person name="Talbot N.J."/>
            <person name="Ebbole D.J."/>
            <person name="Farman M.L."/>
            <person name="Mitchell T.K."/>
            <person name="Orbach M.J."/>
            <person name="Thon M.R."/>
            <person name="Kulkarni R."/>
            <person name="Xu J.-R."/>
            <person name="Pan H."/>
            <person name="Read N.D."/>
            <person name="Lee Y.-H."/>
            <person name="Carbone I."/>
            <person name="Brown D."/>
            <person name="Oh Y.Y."/>
            <person name="Donofrio N."/>
            <person name="Jeong J.S."/>
            <person name="Soanes D.M."/>
            <person name="Djonovic S."/>
            <person name="Kolomiets E."/>
            <person name="Rehmeyer C."/>
            <person name="Li W."/>
            <person name="Harding M."/>
            <person name="Kim S."/>
            <person name="Lebrun M.-H."/>
            <person name="Bohnert H."/>
            <person name="Coughlan S."/>
            <person name="Butler J."/>
            <person name="Calvo S.E."/>
            <person name="Ma L.-J."/>
            <person name="Nicol R."/>
            <person name="Purcell S."/>
            <person name="Nusbaum C."/>
            <person name="Galagan J.E."/>
            <person name="Birren B.W."/>
        </authorList>
    </citation>
    <scope>NUCLEOTIDE SEQUENCE [LARGE SCALE GENOMIC DNA]</scope>
    <source>
        <strain>70-15 / ATCC MYA-4617 / FGSC 8958</strain>
    </source>
</reference>
<reference evidence="6" key="2">
    <citation type="journal article" date="2007" name="Plant Cell">
        <title>Magnaporthe grisea cutinase2 mediates appressorium differentiation and host penetration and is required for full virulence.</title>
        <authorList>
            <person name="Skamnioti P."/>
            <person name="Gurr S.J."/>
        </authorList>
    </citation>
    <scope>FUNCTION</scope>
    <scope>CATALYTIC ACTIVITY</scope>
    <scope>SUBCELLULAR LOCATION</scope>
    <scope>INDUCTION</scope>
    <scope>DISRUPTION PHENOTYPE</scope>
    <source>
        <strain evidence="5">Guy11</strain>
    </source>
</reference>
<dbReference type="EC" id="3.1.1.74" evidence="3 7"/>
<dbReference type="EMBL" id="CM001233">
    <property type="protein sequence ID" value="EHA51400.1"/>
    <property type="molecule type" value="Genomic_DNA"/>
</dbReference>
<dbReference type="RefSeq" id="XP_003711207.1">
    <property type="nucleotide sequence ID" value="XM_003711159.1"/>
</dbReference>
<dbReference type="SMR" id="G4MZV6"/>
<dbReference type="ESTHER" id="mago7-g4mzv6">
    <property type="family name" value="Cutinase"/>
</dbReference>
<dbReference type="EnsemblFungi" id="MGG_09100T0">
    <property type="protein sequence ID" value="MGG_09100T0"/>
    <property type="gene ID" value="MGG_09100"/>
</dbReference>
<dbReference type="GeneID" id="2680019"/>
<dbReference type="KEGG" id="mgr:MGG_09100"/>
<dbReference type="VEuPathDB" id="FungiDB:MGG_09100"/>
<dbReference type="eggNOG" id="ENOG502SI38">
    <property type="taxonomic scope" value="Eukaryota"/>
</dbReference>
<dbReference type="HOGENOM" id="CLU_040058_2_0_1"/>
<dbReference type="InParanoid" id="G4MZV6"/>
<dbReference type="OMA" id="QCPNARI"/>
<dbReference type="OrthoDB" id="3225429at2759"/>
<dbReference type="Proteomes" id="UP000009058">
    <property type="component" value="Chromosome 3"/>
</dbReference>
<dbReference type="GO" id="GO:0005576">
    <property type="term" value="C:extracellular region"/>
    <property type="evidence" value="ECO:0007669"/>
    <property type="project" value="UniProtKB-SubCell"/>
</dbReference>
<dbReference type="GO" id="GO:0050525">
    <property type="term" value="F:cutinase activity"/>
    <property type="evidence" value="ECO:0000315"/>
    <property type="project" value="UniProtKB"/>
</dbReference>
<dbReference type="GO" id="GO:0120326">
    <property type="term" value="P:appressorium-mediated entry into host"/>
    <property type="evidence" value="ECO:0000315"/>
    <property type="project" value="UniProtKB"/>
</dbReference>
<dbReference type="GO" id="GO:0016052">
    <property type="term" value="P:carbohydrate catabolic process"/>
    <property type="evidence" value="ECO:0007669"/>
    <property type="project" value="TreeGrafter"/>
</dbReference>
<dbReference type="Gene3D" id="3.40.50.1820">
    <property type="entry name" value="alpha/beta hydrolase"/>
    <property type="match status" value="1"/>
</dbReference>
<dbReference type="InterPro" id="IPR029058">
    <property type="entry name" value="AB_hydrolase_fold"/>
</dbReference>
<dbReference type="InterPro" id="IPR000675">
    <property type="entry name" value="Cutinase/axe"/>
</dbReference>
<dbReference type="InterPro" id="IPR043580">
    <property type="entry name" value="CUTINASE_1"/>
</dbReference>
<dbReference type="InterPro" id="IPR043579">
    <property type="entry name" value="CUTINASE_2"/>
</dbReference>
<dbReference type="InterPro" id="IPR011150">
    <property type="entry name" value="Cutinase_monf"/>
</dbReference>
<dbReference type="PANTHER" id="PTHR48250:SF3">
    <property type="entry name" value="CUTINASE 1-RELATED"/>
    <property type="match status" value="1"/>
</dbReference>
<dbReference type="PANTHER" id="PTHR48250">
    <property type="entry name" value="CUTINASE 2-RELATED"/>
    <property type="match status" value="1"/>
</dbReference>
<dbReference type="Pfam" id="PF01083">
    <property type="entry name" value="Cutinase"/>
    <property type="match status" value="1"/>
</dbReference>
<dbReference type="PRINTS" id="PR00129">
    <property type="entry name" value="CUTINASE"/>
</dbReference>
<dbReference type="SMART" id="SM01110">
    <property type="entry name" value="Cutinase"/>
    <property type="match status" value="1"/>
</dbReference>
<dbReference type="SUPFAM" id="SSF53474">
    <property type="entry name" value="alpha/beta-Hydrolases"/>
    <property type="match status" value="1"/>
</dbReference>
<dbReference type="PROSITE" id="PS00155">
    <property type="entry name" value="CUTINASE_1"/>
    <property type="match status" value="1"/>
</dbReference>
<dbReference type="PROSITE" id="PS00931">
    <property type="entry name" value="CUTINASE_2"/>
    <property type="match status" value="1"/>
</dbReference>
<accession>G4MZV6</accession>
<comment type="function">
    <text evidence="4">Catalyzes the hydrolysis of complex carboxylic polyesters found in the cell wall of plants (PubMed:17704215). Degrades cutin, a macromolecule that forms the structure of the plant cuticle (PubMed:17704215). Required for efficient penetration of the host plant cuticle by the appressorium during the initial stage of fungal infection (PubMed:17704215).</text>
</comment>
<comment type="catalytic activity">
    <reaction evidence="3 7">
        <text>cutin + H2O = cutin monomers.</text>
        <dbReference type="EC" id="3.1.1.74"/>
    </reaction>
</comment>
<comment type="subcellular location">
    <subcellularLocation>
        <location evidence="4">Secreted</location>
    </subcellularLocation>
</comment>
<comment type="induction">
    <text evidence="4">Induced during infection; levels are increased during germ tube and appressorium differentiation, and during penetration.</text>
</comment>
<comment type="PTM">
    <text evidence="2">The 2 disulfide bonds play a critical role in holding the catalytic residues in juxta-position; reduction of the disulfide bridges results in the complete inactivation of the enzyme.</text>
</comment>
<comment type="disruption phenotype">
    <text evidence="4">Decreases secreted carboxylic ester hydrolase activity during growth on cutin carbon source (PubMed:17704215). Decreases conidiation and results in abnormal germling morphology (PubMed:17704215). Impairs penetration of the host epidermis and decreases virulence in rice and wheat (PubMed:17704215).</text>
</comment>
<comment type="similarity">
    <text evidence="6">Belongs to the cutinase family.</text>
</comment>
<feature type="signal peptide" evidence="3">
    <location>
        <begin position="1"/>
        <end position="18"/>
    </location>
</feature>
<feature type="chain" id="PRO_5005132179" description="Cutinase CUT2" evidence="3">
    <location>
        <begin position="19"/>
        <end position="214"/>
    </location>
</feature>
<feature type="active site" description="Nucleophile" evidence="1">
    <location>
        <position position="128"/>
    </location>
</feature>
<feature type="active site" evidence="1">
    <location>
        <position position="183"/>
    </location>
</feature>
<feature type="active site" description="Proton donor/acceptor" evidence="1">
    <location>
        <position position="196"/>
    </location>
</feature>
<feature type="site" description="Transition state stabilizer" evidence="1">
    <location>
        <position position="129"/>
    </location>
</feature>
<feature type="disulfide bond" evidence="1">
    <location>
        <begin position="40"/>
        <end position="117"/>
    </location>
</feature>
<feature type="disulfide bond" evidence="1">
    <location>
        <begin position="179"/>
        <end position="186"/>
    </location>
</feature>
<evidence type="ECO:0000250" key="1">
    <source>
        <dbReference type="UniProtKB" id="P00590"/>
    </source>
</evidence>
<evidence type="ECO:0000250" key="2">
    <source>
        <dbReference type="UniProtKB" id="P11373"/>
    </source>
</evidence>
<evidence type="ECO:0000255" key="3">
    <source>
        <dbReference type="RuleBase" id="RU361263"/>
    </source>
</evidence>
<evidence type="ECO:0000269" key="4">
    <source>
    </source>
</evidence>
<evidence type="ECO:0000303" key="5">
    <source>
    </source>
</evidence>
<evidence type="ECO:0000305" key="6"/>
<evidence type="ECO:0000305" key="7">
    <source>
    </source>
</evidence>
<evidence type="ECO:0000312" key="8">
    <source>
        <dbReference type="EMBL" id="EHA51400.1"/>
    </source>
</evidence>
<evidence type="ECO:0000312" key="9">
    <source>
        <dbReference type="Proteomes" id="UP000009058"/>
    </source>
</evidence>
<sequence>MQFSLSIATAILAATASAMPVLETRQTVGTTANEFTSGGCKDVVLLYARGTTQAGNMGQEPGPELGNALKARLGAARVAVQGVAYSASLLGNLNPGGAPANEATSFRTLIGQVASQCPNARIVVSGYSQGAALVHRAVEGATAAVRARIAAGVTFGDTQKQQDGGRIPGLDASKTLIICNTGDRVCEGTLIITAAHSGYGARAGEAVDFIAARV</sequence>
<keyword id="KW-1015">Disulfide bond</keyword>
<keyword id="KW-0378">Hydrolase</keyword>
<keyword id="KW-1185">Reference proteome</keyword>
<keyword id="KW-0964">Secreted</keyword>
<keyword id="KW-0719">Serine esterase</keyword>
<keyword id="KW-0732">Signal</keyword>
<keyword id="KW-0843">Virulence</keyword>
<gene>
    <name evidence="5" type="primary">CUT2</name>
    <name evidence="8" type="ORF">MGG_09100</name>
</gene>
<name>CUTI2_PYRO7</name>
<proteinExistence type="evidence at protein level"/>